<sequence length="328" mass="36003">MNRRNFIKAASCGALLTGALPSVSHAAAENRPPIPGSLGMLYDSTLCVGCQACVTKCQDINFPERNPQGEQTWSNNDKLSPYTNNIIQVWTSGTGVNKDQEENGYAYIKKQCMHCVDPNCVSVCPVSALKKDPKTGIVHYDKDVCTGCRYCMVACPYNVPKYDYNNPFGALHKCELCNQKGVERLDKGGLPGCVEVCPAGAVIFGTREELMAEAKKRLALKPGSEYHYPRQTLKSGDTYLHTVPKYYPHLYGEKEGGGTQVLVLTGVPYENLDLPKLDDLSTGARSENIQHTLYKGMMLPLAVLAGLTVLVRRNTKNDHHDGGDDHES</sequence>
<proteinExistence type="inferred from homology"/>
<dbReference type="EMBL" id="AE005174">
    <property type="protein sequence ID" value="AAG58133.1"/>
    <property type="molecule type" value="Genomic_DNA"/>
</dbReference>
<dbReference type="EMBL" id="BA000007">
    <property type="protein sequence ID" value="BAB37304.1"/>
    <property type="molecule type" value="Genomic_DNA"/>
</dbReference>
<dbReference type="PIR" id="A91114">
    <property type="entry name" value="A91114"/>
</dbReference>
<dbReference type="RefSeq" id="NP_311908.1">
    <property type="nucleotide sequence ID" value="NC_002695.1"/>
</dbReference>
<dbReference type="RefSeq" id="WP_001081870.1">
    <property type="nucleotide sequence ID" value="NZ_VOAI01000009.1"/>
</dbReference>
<dbReference type="STRING" id="155864.Z4350"/>
<dbReference type="GeneID" id="916288"/>
<dbReference type="GeneID" id="93778989"/>
<dbReference type="KEGG" id="ece:Z4350"/>
<dbReference type="KEGG" id="ecs:ECs_3881"/>
<dbReference type="PATRIC" id="fig|386585.9.peg.4048"/>
<dbReference type="eggNOG" id="COG0437">
    <property type="taxonomic scope" value="Bacteria"/>
</dbReference>
<dbReference type="HOGENOM" id="CLU_043374_0_0_6"/>
<dbReference type="OMA" id="PKYDYDN"/>
<dbReference type="Proteomes" id="UP000000558">
    <property type="component" value="Chromosome"/>
</dbReference>
<dbReference type="Proteomes" id="UP000002519">
    <property type="component" value="Chromosome"/>
</dbReference>
<dbReference type="GO" id="GO:0042597">
    <property type="term" value="C:periplasmic space"/>
    <property type="evidence" value="ECO:0007669"/>
    <property type="project" value="UniProtKB-SubCell"/>
</dbReference>
<dbReference type="GO" id="GO:0051539">
    <property type="term" value="F:4 iron, 4 sulfur cluster binding"/>
    <property type="evidence" value="ECO:0007669"/>
    <property type="project" value="UniProtKB-KW"/>
</dbReference>
<dbReference type="GO" id="GO:0046872">
    <property type="term" value="F:metal ion binding"/>
    <property type="evidence" value="ECO:0007669"/>
    <property type="project" value="UniProtKB-KW"/>
</dbReference>
<dbReference type="GO" id="GO:0016491">
    <property type="term" value="F:oxidoreductase activity"/>
    <property type="evidence" value="ECO:0007669"/>
    <property type="project" value="UniProtKB-KW"/>
</dbReference>
<dbReference type="CDD" id="cd10561">
    <property type="entry name" value="HybA_like"/>
    <property type="match status" value="1"/>
</dbReference>
<dbReference type="FunFam" id="3.30.70.20:FF:000003">
    <property type="entry name" value="Dimethyl sulfoxide reductase subunit B"/>
    <property type="match status" value="1"/>
</dbReference>
<dbReference type="Gene3D" id="3.30.70.20">
    <property type="match status" value="2"/>
</dbReference>
<dbReference type="InterPro" id="IPR017896">
    <property type="entry name" value="4Fe4S_Fe-S-bd"/>
</dbReference>
<dbReference type="InterPro" id="IPR017900">
    <property type="entry name" value="4Fe4S_Fe_S_CS"/>
</dbReference>
<dbReference type="InterPro" id="IPR051555">
    <property type="entry name" value="FDH_Electron_Transfer_Unit"/>
</dbReference>
<dbReference type="InterPro" id="IPR019546">
    <property type="entry name" value="TAT_signal_bac_arc"/>
</dbReference>
<dbReference type="NCBIfam" id="NF008134">
    <property type="entry name" value="PRK10882.1"/>
    <property type="match status" value="1"/>
</dbReference>
<dbReference type="NCBIfam" id="TIGR01409">
    <property type="entry name" value="TAT_signal_seq"/>
    <property type="match status" value="1"/>
</dbReference>
<dbReference type="PANTHER" id="PTHR43545">
    <property type="entry name" value="FORMATE DEHYDROGENASE, NITRATE-INDUCIBLE, IRON-SULFUR SUBUNIT"/>
    <property type="match status" value="1"/>
</dbReference>
<dbReference type="PANTHER" id="PTHR43545:SF1">
    <property type="entry name" value="HYDROGENASE-2 OPERON PROTEIN HYBA"/>
    <property type="match status" value="1"/>
</dbReference>
<dbReference type="Pfam" id="PF13247">
    <property type="entry name" value="Fer4_11"/>
    <property type="match status" value="1"/>
</dbReference>
<dbReference type="SUPFAM" id="SSF54862">
    <property type="entry name" value="4Fe-4S ferredoxins"/>
    <property type="match status" value="1"/>
</dbReference>
<dbReference type="PROSITE" id="PS00198">
    <property type="entry name" value="4FE4S_FER_1"/>
    <property type="match status" value="1"/>
</dbReference>
<dbReference type="PROSITE" id="PS51379">
    <property type="entry name" value="4FE4S_FER_2"/>
    <property type="match status" value="3"/>
</dbReference>
<gene>
    <name type="primary">hybA</name>
    <name type="ordered locus">Z4350</name>
    <name type="ordered locus">ECs3881</name>
</gene>
<accession>P0AAJ9</accession>
<accession>P37179</accession>
<name>HYBA_ECO57</name>
<evidence type="ECO:0000250" key="1"/>
<evidence type="ECO:0000255" key="2"/>
<evidence type="ECO:0000255" key="3">
    <source>
        <dbReference type="PROSITE-ProRule" id="PRU00711"/>
    </source>
</evidence>
<keyword id="KW-0004">4Fe-4S</keyword>
<keyword id="KW-0408">Iron</keyword>
<keyword id="KW-0411">Iron-sulfur</keyword>
<keyword id="KW-0479">Metal-binding</keyword>
<keyword id="KW-0560">Oxidoreductase</keyword>
<keyword id="KW-0574">Periplasm</keyword>
<keyword id="KW-1185">Reference proteome</keyword>
<keyword id="KW-0677">Repeat</keyword>
<keyword id="KW-0732">Signal</keyword>
<organism>
    <name type="scientific">Escherichia coli O157:H7</name>
    <dbReference type="NCBI Taxonomy" id="83334"/>
    <lineage>
        <taxon>Bacteria</taxon>
        <taxon>Pseudomonadati</taxon>
        <taxon>Pseudomonadota</taxon>
        <taxon>Gammaproteobacteria</taxon>
        <taxon>Enterobacterales</taxon>
        <taxon>Enterobacteriaceae</taxon>
        <taxon>Escherichia</taxon>
    </lineage>
</organism>
<feature type="signal peptide" evidence="2">
    <location>
        <begin position="1"/>
        <end position="27"/>
    </location>
</feature>
<feature type="chain" id="PRO_0000042274" description="Hydrogenase-2 operon protein HybA">
    <location>
        <begin position="28"/>
        <end position="328"/>
    </location>
</feature>
<feature type="domain" description="4Fe-4S ferredoxin-type 1" evidence="3">
    <location>
        <begin position="38"/>
        <end position="68"/>
    </location>
</feature>
<feature type="domain" description="4Fe-4S ferredoxin-type 2" evidence="3">
    <location>
        <begin position="103"/>
        <end position="134"/>
    </location>
</feature>
<feature type="domain" description="4Fe-4S ferredoxin-type 3" evidence="3">
    <location>
        <begin position="136"/>
        <end position="165"/>
    </location>
</feature>
<feature type="binding site" evidence="1">
    <location>
        <position position="47"/>
    </location>
    <ligand>
        <name>[4Fe-4S] cluster</name>
        <dbReference type="ChEBI" id="CHEBI:49883"/>
        <label>1</label>
    </ligand>
</feature>
<feature type="binding site" evidence="1">
    <location>
        <position position="50"/>
    </location>
    <ligand>
        <name>[4Fe-4S] cluster</name>
        <dbReference type="ChEBI" id="CHEBI:49883"/>
        <label>1</label>
    </ligand>
</feature>
<feature type="binding site" evidence="1">
    <location>
        <position position="53"/>
    </location>
    <ligand>
        <name>[4Fe-4S] cluster</name>
        <dbReference type="ChEBI" id="CHEBI:49883"/>
        <label>1</label>
    </ligand>
</feature>
<feature type="binding site" evidence="1">
    <location>
        <position position="57"/>
    </location>
    <ligand>
        <name>[4Fe-4S] cluster</name>
        <dbReference type="ChEBI" id="CHEBI:49883"/>
        <label>2</label>
    </ligand>
</feature>
<feature type="binding site" evidence="1">
    <location>
        <position position="112"/>
    </location>
    <ligand>
        <name>[4Fe-4S] cluster</name>
        <dbReference type="ChEBI" id="CHEBI:49883"/>
        <label>3</label>
    </ligand>
</feature>
<feature type="binding site" evidence="1">
    <location>
        <position position="115"/>
    </location>
    <ligand>
        <name>[4Fe-4S] cluster</name>
        <dbReference type="ChEBI" id="CHEBI:49883"/>
        <label>3</label>
    </ligand>
</feature>
<feature type="binding site" evidence="1">
    <location>
        <position position="120"/>
    </location>
    <ligand>
        <name>[4Fe-4S] cluster</name>
        <dbReference type="ChEBI" id="CHEBI:49883"/>
        <label>3</label>
    </ligand>
</feature>
<feature type="binding site" evidence="1">
    <location>
        <position position="124"/>
    </location>
    <ligand>
        <name>[4Fe-4S] cluster</name>
        <dbReference type="ChEBI" id="CHEBI:49883"/>
        <label>4</label>
    </ligand>
</feature>
<feature type="binding site" evidence="1">
    <location>
        <position position="145"/>
    </location>
    <ligand>
        <name>[4Fe-4S] cluster</name>
        <dbReference type="ChEBI" id="CHEBI:49883"/>
        <label>4</label>
    </ligand>
</feature>
<feature type="binding site" evidence="1">
    <location>
        <position position="148"/>
    </location>
    <ligand>
        <name>[4Fe-4S] cluster</name>
        <dbReference type="ChEBI" id="CHEBI:49883"/>
        <label>4</label>
    </ligand>
</feature>
<feature type="binding site" evidence="1">
    <location>
        <position position="151"/>
    </location>
    <ligand>
        <name>[4Fe-4S] cluster</name>
        <dbReference type="ChEBI" id="CHEBI:49883"/>
        <label>4</label>
    </ligand>
</feature>
<feature type="binding site" evidence="1">
    <location>
        <position position="155"/>
    </location>
    <ligand>
        <name>[4Fe-4S] cluster</name>
        <dbReference type="ChEBI" id="CHEBI:49883"/>
        <label>3</label>
    </ligand>
</feature>
<feature type="binding site" evidence="1">
    <location>
        <position position="174"/>
    </location>
    <ligand>
        <name>[4Fe-4S] cluster</name>
        <dbReference type="ChEBI" id="CHEBI:49883"/>
        <label>2</label>
    </ligand>
</feature>
<feature type="binding site" evidence="1">
    <location>
        <position position="177"/>
    </location>
    <ligand>
        <name>[4Fe-4S] cluster</name>
        <dbReference type="ChEBI" id="CHEBI:49883"/>
        <label>2</label>
    </ligand>
</feature>
<feature type="binding site" evidence="1">
    <location>
        <position position="193"/>
    </location>
    <ligand>
        <name>[4Fe-4S] cluster</name>
        <dbReference type="ChEBI" id="CHEBI:49883"/>
        <label>2</label>
    </ligand>
</feature>
<feature type="binding site" evidence="1">
    <location>
        <position position="197"/>
    </location>
    <ligand>
        <name>[4Fe-4S] cluster</name>
        <dbReference type="ChEBI" id="CHEBI:49883"/>
        <label>1</label>
    </ligand>
</feature>
<protein>
    <recommendedName>
        <fullName>Hydrogenase-2 operon protein HybA</fullName>
    </recommendedName>
</protein>
<comment type="function">
    <text evidence="1">Participates in the periplasmic electron-transferring activity of hydrogenase 2 during its catalytic turnover.</text>
</comment>
<comment type="cofactor">
    <cofactor evidence="1">
        <name>[4Fe-4S] cluster</name>
        <dbReference type="ChEBI" id="CHEBI:49883"/>
    </cofactor>
    <text evidence="1">Binds 4 [4Fe-4S] clusters.</text>
</comment>
<comment type="subcellular location">
    <subcellularLocation>
        <location evidence="1">Periplasm</location>
    </subcellularLocation>
</comment>
<reference key="1">
    <citation type="journal article" date="2001" name="Nature">
        <title>Genome sequence of enterohaemorrhagic Escherichia coli O157:H7.</title>
        <authorList>
            <person name="Perna N.T."/>
            <person name="Plunkett G. III"/>
            <person name="Burland V."/>
            <person name="Mau B."/>
            <person name="Glasner J.D."/>
            <person name="Rose D.J."/>
            <person name="Mayhew G.F."/>
            <person name="Evans P.S."/>
            <person name="Gregor J."/>
            <person name="Kirkpatrick H.A."/>
            <person name="Posfai G."/>
            <person name="Hackett J."/>
            <person name="Klink S."/>
            <person name="Boutin A."/>
            <person name="Shao Y."/>
            <person name="Miller L."/>
            <person name="Grotbeck E.J."/>
            <person name="Davis N.W."/>
            <person name="Lim A."/>
            <person name="Dimalanta E.T."/>
            <person name="Potamousis K."/>
            <person name="Apodaca J."/>
            <person name="Anantharaman T.S."/>
            <person name="Lin J."/>
            <person name="Yen G."/>
            <person name="Schwartz D.C."/>
            <person name="Welch R.A."/>
            <person name="Blattner F.R."/>
        </authorList>
    </citation>
    <scope>NUCLEOTIDE SEQUENCE [LARGE SCALE GENOMIC DNA]</scope>
    <source>
        <strain>O157:H7 / EDL933 / ATCC 700927 / EHEC</strain>
    </source>
</reference>
<reference key="2">
    <citation type="journal article" date="2001" name="DNA Res.">
        <title>Complete genome sequence of enterohemorrhagic Escherichia coli O157:H7 and genomic comparison with a laboratory strain K-12.</title>
        <authorList>
            <person name="Hayashi T."/>
            <person name="Makino K."/>
            <person name="Ohnishi M."/>
            <person name="Kurokawa K."/>
            <person name="Ishii K."/>
            <person name="Yokoyama K."/>
            <person name="Han C.-G."/>
            <person name="Ohtsubo E."/>
            <person name="Nakayama K."/>
            <person name="Murata T."/>
            <person name="Tanaka M."/>
            <person name="Tobe T."/>
            <person name="Iida T."/>
            <person name="Takami H."/>
            <person name="Honda T."/>
            <person name="Sasakawa C."/>
            <person name="Ogasawara N."/>
            <person name="Yasunaga T."/>
            <person name="Kuhara S."/>
            <person name="Shiba T."/>
            <person name="Hattori M."/>
            <person name="Shinagawa H."/>
        </authorList>
    </citation>
    <scope>NUCLEOTIDE SEQUENCE [LARGE SCALE GENOMIC DNA]</scope>
    <source>
        <strain>O157:H7 / Sakai / RIMD 0509952 / EHEC</strain>
    </source>
</reference>